<comment type="catalytic activity">
    <reaction evidence="1">
        <text>D-altronate + NAD(+) = keto-D-tagaturonate + NADH + H(+)</text>
        <dbReference type="Rhea" id="RHEA:17813"/>
        <dbReference type="ChEBI" id="CHEBI:15378"/>
        <dbReference type="ChEBI" id="CHEBI:17360"/>
        <dbReference type="ChEBI" id="CHEBI:17886"/>
        <dbReference type="ChEBI" id="CHEBI:57540"/>
        <dbReference type="ChEBI" id="CHEBI:57945"/>
        <dbReference type="EC" id="1.1.1.58"/>
    </reaction>
</comment>
<comment type="pathway">
    <text evidence="1">Carbohydrate metabolism; pentose and glucuronate interconversion.</text>
</comment>
<comment type="similarity">
    <text evidence="1">Belongs to the mannitol dehydrogenase family. UxaB subfamily.</text>
</comment>
<reference key="1">
    <citation type="submission" date="2006-09" db="EMBL/GenBank/DDBJ databases">
        <authorList>
            <consortium name="The Klebsiella pneumonia Genome Sequencing Project"/>
            <person name="McClelland M."/>
            <person name="Sanderson E.K."/>
            <person name="Spieth J."/>
            <person name="Clifton W.S."/>
            <person name="Latreille P."/>
            <person name="Sabo A."/>
            <person name="Pepin K."/>
            <person name="Bhonagiri V."/>
            <person name="Porwollik S."/>
            <person name="Ali J."/>
            <person name="Wilson R.K."/>
        </authorList>
    </citation>
    <scope>NUCLEOTIDE SEQUENCE [LARGE SCALE GENOMIC DNA]</scope>
    <source>
        <strain>ATCC 700721 / MGH 78578</strain>
    </source>
</reference>
<proteinExistence type="inferred from homology"/>
<accession>A6T900</accession>
<dbReference type="EC" id="1.1.1.58" evidence="1"/>
<dbReference type="EMBL" id="CP000647">
    <property type="protein sequence ID" value="ABR77071.1"/>
    <property type="molecule type" value="Genomic_DNA"/>
</dbReference>
<dbReference type="RefSeq" id="WP_015958391.1">
    <property type="nucleotide sequence ID" value="NC_009648.1"/>
</dbReference>
<dbReference type="SMR" id="A6T900"/>
<dbReference type="STRING" id="272620.KPN_01640"/>
<dbReference type="PaxDb" id="272620-KPN_01640"/>
<dbReference type="EnsemblBacteria" id="ABR77071">
    <property type="protein sequence ID" value="ABR77071"/>
    <property type="gene ID" value="KPN_01640"/>
</dbReference>
<dbReference type="KEGG" id="kpn:KPN_01640"/>
<dbReference type="HOGENOM" id="CLU_027324_1_0_6"/>
<dbReference type="UniPathway" id="UPA00246"/>
<dbReference type="Proteomes" id="UP000000265">
    <property type="component" value="Chromosome"/>
</dbReference>
<dbReference type="GO" id="GO:0005829">
    <property type="term" value="C:cytosol"/>
    <property type="evidence" value="ECO:0007669"/>
    <property type="project" value="TreeGrafter"/>
</dbReference>
<dbReference type="GO" id="GO:0008926">
    <property type="term" value="F:mannitol-1-phosphate 5-dehydrogenase activity"/>
    <property type="evidence" value="ECO:0007669"/>
    <property type="project" value="TreeGrafter"/>
</dbReference>
<dbReference type="GO" id="GO:0009026">
    <property type="term" value="F:tagaturonate reductase activity"/>
    <property type="evidence" value="ECO:0007669"/>
    <property type="project" value="UniProtKB-UniRule"/>
</dbReference>
<dbReference type="GO" id="GO:0019698">
    <property type="term" value="P:D-galacturonate catabolic process"/>
    <property type="evidence" value="ECO:0007669"/>
    <property type="project" value="TreeGrafter"/>
</dbReference>
<dbReference type="GO" id="GO:0019592">
    <property type="term" value="P:mannitol catabolic process"/>
    <property type="evidence" value="ECO:0007669"/>
    <property type="project" value="TreeGrafter"/>
</dbReference>
<dbReference type="FunFam" id="3.40.50.720:FF:000153">
    <property type="entry name" value="Altronate oxidoreductase"/>
    <property type="match status" value="1"/>
</dbReference>
<dbReference type="Gene3D" id="1.10.1040.10">
    <property type="entry name" value="N-(1-d-carboxylethyl)-l-norvaline Dehydrogenase, domain 2"/>
    <property type="match status" value="1"/>
</dbReference>
<dbReference type="Gene3D" id="3.40.50.720">
    <property type="entry name" value="NAD(P)-binding Rossmann-like Domain"/>
    <property type="match status" value="1"/>
</dbReference>
<dbReference type="HAMAP" id="MF_00670">
    <property type="entry name" value="Altron_oxidoreduct"/>
    <property type="match status" value="1"/>
</dbReference>
<dbReference type="InterPro" id="IPR008927">
    <property type="entry name" value="6-PGluconate_DH-like_C_sf"/>
</dbReference>
<dbReference type="InterPro" id="IPR013328">
    <property type="entry name" value="6PGD_dom2"/>
</dbReference>
<dbReference type="InterPro" id="IPR023668">
    <property type="entry name" value="Altronate_OxRdtase"/>
</dbReference>
<dbReference type="InterPro" id="IPR013118">
    <property type="entry name" value="Mannitol_DH_C"/>
</dbReference>
<dbReference type="InterPro" id="IPR013131">
    <property type="entry name" value="Mannitol_DH_N"/>
</dbReference>
<dbReference type="InterPro" id="IPR036291">
    <property type="entry name" value="NAD(P)-bd_dom_sf"/>
</dbReference>
<dbReference type="NCBIfam" id="NF002969">
    <property type="entry name" value="PRK03643.1"/>
    <property type="match status" value="1"/>
</dbReference>
<dbReference type="PANTHER" id="PTHR30524:SF0">
    <property type="entry name" value="ALTRONATE OXIDOREDUCTASE-RELATED"/>
    <property type="match status" value="1"/>
</dbReference>
<dbReference type="PANTHER" id="PTHR30524">
    <property type="entry name" value="MANNITOL-1-PHOSPHATE 5-DEHYDROGENASE"/>
    <property type="match status" value="1"/>
</dbReference>
<dbReference type="Pfam" id="PF01232">
    <property type="entry name" value="Mannitol_dh"/>
    <property type="match status" value="1"/>
</dbReference>
<dbReference type="Pfam" id="PF08125">
    <property type="entry name" value="Mannitol_dh_C"/>
    <property type="match status" value="1"/>
</dbReference>
<dbReference type="SUPFAM" id="SSF48179">
    <property type="entry name" value="6-phosphogluconate dehydrogenase C-terminal domain-like"/>
    <property type="match status" value="1"/>
</dbReference>
<dbReference type="SUPFAM" id="SSF51735">
    <property type="entry name" value="NAD(P)-binding Rossmann-fold domains"/>
    <property type="match status" value="1"/>
</dbReference>
<organism>
    <name type="scientific">Klebsiella pneumoniae subsp. pneumoniae (strain ATCC 700721 / MGH 78578)</name>
    <dbReference type="NCBI Taxonomy" id="272620"/>
    <lineage>
        <taxon>Bacteria</taxon>
        <taxon>Pseudomonadati</taxon>
        <taxon>Pseudomonadota</taxon>
        <taxon>Gammaproteobacteria</taxon>
        <taxon>Enterobacterales</taxon>
        <taxon>Enterobacteriaceae</taxon>
        <taxon>Klebsiella/Raoultella group</taxon>
        <taxon>Klebsiella</taxon>
        <taxon>Klebsiella pneumoniae complex</taxon>
    </lineage>
</organism>
<evidence type="ECO:0000255" key="1">
    <source>
        <dbReference type="HAMAP-Rule" id="MF_00670"/>
    </source>
</evidence>
<gene>
    <name evidence="1" type="primary">uxaB</name>
    <name type="ordered locus">KPN78578_16100</name>
    <name type="ORF">KPN_01640</name>
</gene>
<sequence length="483" mass="54042">MKTLNRRDFPGAQYPDRIIQFGEGNFLRAFVDWQIDLLNEHTDLNAGIVVVRPIATDFPPSLNTQDGLYTTIIRGLNEQGEAVSDARLIRSVNREISAYADFDAFLRLAHNPEMRFVFSNTTEAGISYHAGDRFDDAPPVSYPAKLTRLLFERYQHFAGAADKGWVIIPCELIDYNGEALQALVLRYASEWELPQAFITWLTSANTFCSTLVDRIVTGYPRDEVAALEAQTGYKDAFLDTAEHFYLFVIQGPASLAAELRLDKLPLNVRIVDDIKPYKERKVAILNGAHTALVPVAFQAGIDTVGEAMNDAEICAFVEKAIYDEIIPVLDLPRDELVSFASAVTGRFRNPYIKHQLLSIALNGMTKYRTRILPQLLAGQKAHGALPPRLTFALAALIAFYRGERDGESYPVQDDADWISRYQTLWARHRDGQMSTRELVTAVLSVADHWQQDLSQTPGLVELVTADLDAILTCGMRDAVKPLC</sequence>
<feature type="chain" id="PRO_1000044706" description="Altronate oxidoreductase">
    <location>
        <begin position="1"/>
        <end position="483"/>
    </location>
</feature>
<feature type="binding site" evidence="1">
    <location>
        <begin position="18"/>
        <end position="29"/>
    </location>
    <ligand>
        <name>NAD(+)</name>
        <dbReference type="ChEBI" id="CHEBI:57540"/>
    </ligand>
</feature>
<name>UXAB_KLEP7</name>
<keyword id="KW-0520">NAD</keyword>
<keyword id="KW-0560">Oxidoreductase</keyword>
<protein>
    <recommendedName>
        <fullName evidence="1">Altronate oxidoreductase</fullName>
        <ecNumber evidence="1">1.1.1.58</ecNumber>
    </recommendedName>
    <alternativeName>
        <fullName evidence="1">Tagaturonate dehydrogenase</fullName>
    </alternativeName>
    <alternativeName>
        <fullName evidence="1">Tagaturonate reductase</fullName>
    </alternativeName>
</protein>